<protein>
    <recommendedName>
        <fullName evidence="1">UPF0434 protein Ssed_2824</fullName>
    </recommendedName>
</protein>
<keyword id="KW-1185">Reference proteome</keyword>
<dbReference type="EMBL" id="CP000821">
    <property type="protein sequence ID" value="ABV37431.1"/>
    <property type="molecule type" value="Genomic_DNA"/>
</dbReference>
<dbReference type="RefSeq" id="WP_012143161.1">
    <property type="nucleotide sequence ID" value="NC_009831.1"/>
</dbReference>
<dbReference type="SMR" id="A8FX58"/>
<dbReference type="STRING" id="425104.Ssed_2824"/>
<dbReference type="KEGG" id="sse:Ssed_2824"/>
<dbReference type="eggNOG" id="COG2835">
    <property type="taxonomic scope" value="Bacteria"/>
</dbReference>
<dbReference type="HOGENOM" id="CLU_155659_3_1_6"/>
<dbReference type="OrthoDB" id="9812205at2"/>
<dbReference type="Proteomes" id="UP000002015">
    <property type="component" value="Chromosome"/>
</dbReference>
<dbReference type="GO" id="GO:0005829">
    <property type="term" value="C:cytosol"/>
    <property type="evidence" value="ECO:0007669"/>
    <property type="project" value="TreeGrafter"/>
</dbReference>
<dbReference type="FunFam" id="2.20.25.10:FF:000002">
    <property type="entry name" value="UPF0434 protein YcaR"/>
    <property type="match status" value="1"/>
</dbReference>
<dbReference type="Gene3D" id="2.20.25.10">
    <property type="match status" value="1"/>
</dbReference>
<dbReference type="HAMAP" id="MF_01187">
    <property type="entry name" value="UPF0434"/>
    <property type="match status" value="1"/>
</dbReference>
<dbReference type="InterPro" id="IPR005651">
    <property type="entry name" value="Trm112-like"/>
</dbReference>
<dbReference type="PANTHER" id="PTHR33505:SF4">
    <property type="entry name" value="PROTEIN PREY, MITOCHONDRIAL"/>
    <property type="match status" value="1"/>
</dbReference>
<dbReference type="PANTHER" id="PTHR33505">
    <property type="entry name" value="ZGC:162634"/>
    <property type="match status" value="1"/>
</dbReference>
<dbReference type="Pfam" id="PF03966">
    <property type="entry name" value="Trm112p"/>
    <property type="match status" value="1"/>
</dbReference>
<dbReference type="SUPFAM" id="SSF158997">
    <property type="entry name" value="Trm112p-like"/>
    <property type="match status" value="1"/>
</dbReference>
<organism>
    <name type="scientific">Shewanella sediminis (strain HAW-EB3)</name>
    <dbReference type="NCBI Taxonomy" id="425104"/>
    <lineage>
        <taxon>Bacteria</taxon>
        <taxon>Pseudomonadati</taxon>
        <taxon>Pseudomonadota</taxon>
        <taxon>Gammaproteobacteria</taxon>
        <taxon>Alteromonadales</taxon>
        <taxon>Shewanellaceae</taxon>
        <taxon>Shewanella</taxon>
    </lineage>
</organism>
<accession>A8FX58</accession>
<comment type="similarity">
    <text evidence="1">Belongs to the UPF0434 family.</text>
</comment>
<proteinExistence type="inferred from homology"/>
<gene>
    <name type="ordered locus">Ssed_2824</name>
</gene>
<sequence>MSFDKKLLEIVACPVCKGKLDYEKSSQRLICKADHLAYPINDGIPVLLENKAERWQEAEA</sequence>
<reference key="1">
    <citation type="submission" date="2007-08" db="EMBL/GenBank/DDBJ databases">
        <title>Complete sequence of Shewanella sediminis HAW-EB3.</title>
        <authorList>
            <consortium name="US DOE Joint Genome Institute"/>
            <person name="Copeland A."/>
            <person name="Lucas S."/>
            <person name="Lapidus A."/>
            <person name="Barry K."/>
            <person name="Glavina del Rio T."/>
            <person name="Dalin E."/>
            <person name="Tice H."/>
            <person name="Pitluck S."/>
            <person name="Chertkov O."/>
            <person name="Brettin T."/>
            <person name="Bruce D."/>
            <person name="Detter J.C."/>
            <person name="Han C."/>
            <person name="Schmutz J."/>
            <person name="Larimer F."/>
            <person name="Land M."/>
            <person name="Hauser L."/>
            <person name="Kyrpides N."/>
            <person name="Kim E."/>
            <person name="Zhao J.-S."/>
            <person name="Richardson P."/>
        </authorList>
    </citation>
    <scope>NUCLEOTIDE SEQUENCE [LARGE SCALE GENOMIC DNA]</scope>
    <source>
        <strain>HAW-EB3</strain>
    </source>
</reference>
<feature type="chain" id="PRO_1000085466" description="UPF0434 protein Ssed_2824">
    <location>
        <begin position="1"/>
        <end position="60"/>
    </location>
</feature>
<evidence type="ECO:0000255" key="1">
    <source>
        <dbReference type="HAMAP-Rule" id="MF_01187"/>
    </source>
</evidence>
<name>Y2824_SHESH</name>